<comment type="function">
    <text evidence="1">Has antibacterial activity.</text>
</comment>
<comment type="subcellular location">
    <subcellularLocation>
        <location evidence="2">Secreted</location>
    </subcellularLocation>
</comment>
<comment type="tissue specificity">
    <text evidence="5">Expressed by the skin glands.</text>
</comment>
<comment type="mass spectrometry" mass="2892.57" method="Electrospray" evidence="2"/>
<comment type="similarity">
    <text evidence="4">Belongs to the frog skin active peptide (FSAP) family. Ranatuerin subfamily.</text>
</comment>
<dbReference type="SMR" id="C0HLX8"/>
<dbReference type="GO" id="GO:0005576">
    <property type="term" value="C:extracellular region"/>
    <property type="evidence" value="ECO:0007669"/>
    <property type="project" value="UniProtKB-SubCell"/>
</dbReference>
<dbReference type="GO" id="GO:0042742">
    <property type="term" value="P:defense response to bacterium"/>
    <property type="evidence" value="ECO:0007669"/>
    <property type="project" value="UniProtKB-KW"/>
</dbReference>
<dbReference type="InterPro" id="IPR012521">
    <property type="entry name" value="Antimicrobial_frog_2"/>
</dbReference>
<dbReference type="Pfam" id="PF08023">
    <property type="entry name" value="Antimicrobial_2"/>
    <property type="match status" value="1"/>
</dbReference>
<feature type="chain" id="PRO_0000454218" description="Ranatuerin-2LT">
    <location>
        <begin position="1"/>
        <end position="28"/>
    </location>
</feature>
<feature type="disulfide bond" evidence="2">
    <location>
        <begin position="23"/>
        <end position="28"/>
    </location>
</feature>
<feature type="unsure residue" description="Assigned by comparison with orthologs" evidence="5">
    <location>
        <position position="2"/>
    </location>
</feature>
<feature type="unsure residue" description="Assigned by comparison with orthologs" evidence="5">
    <location>
        <position position="6"/>
    </location>
</feature>
<feature type="unsure residue" description="Assigned by comparison with orthologs" evidence="5">
    <location>
        <position position="13"/>
    </location>
</feature>
<feature type="unsure residue" description="Assigned by comparison with orthologs" evidence="5">
    <location>
        <position position="18"/>
    </location>
</feature>
<feature type="unsure residue" description="Assigned by comparison with orthologs" evidence="5">
    <location>
        <position position="21"/>
    </location>
</feature>
<sequence length="28" mass="2896">GLMDVLKGAAKNLFASALDKLKCKVTGC</sequence>
<evidence type="ECO:0000250" key="1">
    <source>
        <dbReference type="UniProtKB" id="P86161"/>
    </source>
</evidence>
<evidence type="ECO:0000269" key="2">
    <source>
    </source>
</evidence>
<evidence type="ECO:0000303" key="3">
    <source>
    </source>
</evidence>
<evidence type="ECO:0000305" key="4"/>
<evidence type="ECO:0000305" key="5">
    <source>
    </source>
</evidence>
<proteinExistence type="evidence at protein level"/>
<organism>
    <name type="scientific">Rana latastei</name>
    <name type="common">Italian agile frog</name>
    <dbReference type="NCBI Taxonomy" id="151453"/>
    <lineage>
        <taxon>Eukaryota</taxon>
        <taxon>Metazoa</taxon>
        <taxon>Chordata</taxon>
        <taxon>Craniata</taxon>
        <taxon>Vertebrata</taxon>
        <taxon>Euteleostomi</taxon>
        <taxon>Amphibia</taxon>
        <taxon>Batrachia</taxon>
        <taxon>Anura</taxon>
        <taxon>Neobatrachia</taxon>
        <taxon>Ranoidea</taxon>
        <taxon>Ranidae</taxon>
        <taxon>Rana</taxon>
        <taxon>Rana</taxon>
    </lineage>
</organism>
<keyword id="KW-0878">Amphibian defense peptide</keyword>
<keyword id="KW-0044">Antibiotic</keyword>
<keyword id="KW-0929">Antimicrobial</keyword>
<keyword id="KW-0903">Direct protein sequencing</keyword>
<keyword id="KW-1015">Disulfide bond</keyword>
<keyword id="KW-0964">Secreted</keyword>
<reference evidence="4" key="1">
    <citation type="journal article" date="2016" name="Rapid Commun. Mass Spectrom.">
        <title>LTQ Orbitrap Velos in routine de novo sequencing of non-tryptic skin peptides from the frog Rana latastei with traditional and reliable manual spectra interpretation.</title>
        <authorList>
            <person name="Samgina T.Y."/>
            <person name="Tolpina M.D."/>
            <person name="Trebse P."/>
            <person name="Torkar G."/>
            <person name="Artemenko K.A."/>
            <person name="Bergquist J."/>
            <person name="Lebedev A.T."/>
        </authorList>
    </citation>
    <scope>PROTEIN SEQUENCE</scope>
    <scope>IDENTIFICATION BY MASS SPECTROMETRY</scope>
    <scope>SUBCELLULAR LOCATION</scope>
    <scope>TISSUE SPECIFICITY</scope>
    <scope>DISULFIDE BOND</scope>
</reference>
<protein>
    <recommendedName>
        <fullName evidence="3">Ranatuerin-2LT</fullName>
    </recommendedName>
</protein>
<name>RN2_RANLT</name>
<accession>C0HLX8</accession>